<accession>Q9T1S6</accession>
<organismHost>
    <name type="scientific">Escherichia coli</name>
    <dbReference type="NCBI Taxonomy" id="562"/>
</organismHost>
<gene>
    <name type="primary">22</name>
</gene>
<sequence length="91" mass="10457">MLTGYSLRFLKEALTIHHGDINPPALNGSPCRLNEPDVCQLILDEFKLITVIGDGFTCQWVLKTHHIHRLFFYFVVFCDINHINIVPIIIP</sequence>
<keyword id="KW-1185">Reference proteome</keyword>
<proteinExistence type="predicted"/>
<name>VP22_BPAPS</name>
<protein>
    <recommendedName>
        <fullName>Putative protein p22</fullName>
    </recommendedName>
</protein>
<organism>
    <name type="scientific">Acyrthosiphon pisum secondary endosymbiont phage 1</name>
    <name type="common">Bacteriophage APSE-1</name>
    <dbReference type="NCBI Taxonomy" id="2682836"/>
    <lineage>
        <taxon>Viruses</taxon>
        <taxon>Duplodnaviria</taxon>
        <taxon>Heunggongvirae</taxon>
        <taxon>Uroviricota</taxon>
        <taxon>Caudoviricetes</taxon>
        <taxon>Sendosyvirus</taxon>
        <taxon>Sendosyvirus APSE1</taxon>
    </lineage>
</organism>
<dbReference type="EMBL" id="AF157835">
    <property type="protein sequence ID" value="AAF03965.1"/>
    <property type="molecule type" value="Genomic_DNA"/>
</dbReference>
<dbReference type="RefSeq" id="NP_050983.1">
    <property type="nucleotide sequence ID" value="NC_000935.1"/>
</dbReference>
<dbReference type="KEGG" id="vg:1262316"/>
<dbReference type="Proteomes" id="UP000000853">
    <property type="component" value="Genome"/>
</dbReference>
<feature type="chain" id="PRO_0000077863" description="Putative protein p22">
    <location>
        <begin position="1"/>
        <end position="91"/>
    </location>
</feature>
<reference key="1">
    <citation type="journal article" date="1999" name="Virology">
        <title>Isolation and characterization of APSE-1, a bacteriophage infecting the secondary endosymbiont of acyrthosiphon pisum.</title>
        <authorList>
            <person name="van der Wilk F."/>
            <person name="Dullemans A.M."/>
            <person name="Verbeek M."/>
            <person name="van den Heuvel J.F.J.M."/>
        </authorList>
    </citation>
    <scope>NUCLEOTIDE SEQUENCE [LARGE SCALE GENOMIC DNA]</scope>
</reference>